<accession>Q9Z143</accession>
<dbReference type="EMBL" id="AB002563">
    <property type="protein sequence ID" value="BAA75629.1"/>
    <property type="molecule type" value="mRNA"/>
</dbReference>
<dbReference type="RefSeq" id="NP_062145.1">
    <property type="nucleotide sequence ID" value="NM_019272.2"/>
</dbReference>
<dbReference type="SMR" id="Q9Z143"/>
<dbReference type="FunCoup" id="Q9Z143">
    <property type="interactions" value="1512"/>
</dbReference>
<dbReference type="STRING" id="10116.ENSRNOP00000009269"/>
<dbReference type="GlyCosmos" id="Q9Z143">
    <property type="glycosylation" value="3 sites, No reported glycans"/>
</dbReference>
<dbReference type="GlyGen" id="Q9Z143">
    <property type="glycosylation" value="3 sites"/>
</dbReference>
<dbReference type="iPTMnet" id="Q9Z143"/>
<dbReference type="PhosphoSitePlus" id="Q9Z143"/>
<dbReference type="PaxDb" id="10116-ENSRNOP00000009269"/>
<dbReference type="Ensembl" id="ENSRNOT00000009269.5">
    <property type="protein sequence ID" value="ENSRNOP00000009269.4"/>
    <property type="gene ID" value="ENSRNOG00000006784.5"/>
</dbReference>
<dbReference type="GeneID" id="29745"/>
<dbReference type="KEGG" id="rno:29745"/>
<dbReference type="UCSC" id="RGD:3658">
    <property type="organism name" value="rat"/>
</dbReference>
<dbReference type="AGR" id="RGD:3658"/>
<dbReference type="CTD" id="10505"/>
<dbReference type="RGD" id="3658">
    <property type="gene designation" value="Sema4f"/>
</dbReference>
<dbReference type="eggNOG" id="KOG3611">
    <property type="taxonomic scope" value="Eukaryota"/>
</dbReference>
<dbReference type="GeneTree" id="ENSGT00940000159592"/>
<dbReference type="HOGENOM" id="CLU_009051_6_0_1"/>
<dbReference type="InParanoid" id="Q9Z143"/>
<dbReference type="OMA" id="APLAKCE"/>
<dbReference type="OrthoDB" id="9988752at2759"/>
<dbReference type="PhylomeDB" id="Q9Z143"/>
<dbReference type="TreeFam" id="TF352903"/>
<dbReference type="Reactome" id="R-RNO-9696264">
    <property type="pathway name" value="RND3 GTPase cycle"/>
</dbReference>
<dbReference type="PRO" id="PR:Q9Z143"/>
<dbReference type="Proteomes" id="UP000002494">
    <property type="component" value="Chromosome 4"/>
</dbReference>
<dbReference type="Bgee" id="ENSRNOG00000006784">
    <property type="expression patterns" value="Expressed in frontal cortex and 16 other cell types or tissues"/>
</dbReference>
<dbReference type="GO" id="GO:0030425">
    <property type="term" value="C:dendrite"/>
    <property type="evidence" value="ECO:0007669"/>
    <property type="project" value="UniProtKB-SubCell"/>
</dbReference>
<dbReference type="GO" id="GO:0005783">
    <property type="term" value="C:endoplasmic reticulum"/>
    <property type="evidence" value="ECO:0007669"/>
    <property type="project" value="Ensembl"/>
</dbReference>
<dbReference type="GO" id="GO:0098978">
    <property type="term" value="C:glutamatergic synapse"/>
    <property type="evidence" value="ECO:0000314"/>
    <property type="project" value="SynGO"/>
</dbReference>
<dbReference type="GO" id="GO:0016020">
    <property type="term" value="C:membrane"/>
    <property type="evidence" value="ECO:0000314"/>
    <property type="project" value="MGI"/>
</dbReference>
<dbReference type="GO" id="GO:0043204">
    <property type="term" value="C:perikaryon"/>
    <property type="evidence" value="ECO:0007669"/>
    <property type="project" value="UniProtKB-SubCell"/>
</dbReference>
<dbReference type="GO" id="GO:0005886">
    <property type="term" value="C:plasma membrane"/>
    <property type="evidence" value="ECO:0000266"/>
    <property type="project" value="RGD"/>
</dbReference>
<dbReference type="GO" id="GO:0098839">
    <property type="term" value="C:postsynaptic density membrane"/>
    <property type="evidence" value="ECO:0000314"/>
    <property type="project" value="SynGO"/>
</dbReference>
<dbReference type="GO" id="GO:0045211">
    <property type="term" value="C:postsynaptic membrane"/>
    <property type="evidence" value="ECO:0000314"/>
    <property type="project" value="MGI"/>
</dbReference>
<dbReference type="GO" id="GO:0045202">
    <property type="term" value="C:synapse"/>
    <property type="evidence" value="ECO:0000314"/>
    <property type="project" value="MGI"/>
</dbReference>
<dbReference type="GO" id="GO:0045499">
    <property type="term" value="F:chemorepellent activity"/>
    <property type="evidence" value="ECO:0000318"/>
    <property type="project" value="GO_Central"/>
</dbReference>
<dbReference type="GO" id="GO:0038191">
    <property type="term" value="F:neuropilin binding"/>
    <property type="evidence" value="ECO:0000318"/>
    <property type="project" value="GO_Central"/>
</dbReference>
<dbReference type="GO" id="GO:0030215">
    <property type="term" value="F:semaphorin receptor binding"/>
    <property type="evidence" value="ECO:0000318"/>
    <property type="project" value="GO_Central"/>
</dbReference>
<dbReference type="GO" id="GO:0007411">
    <property type="term" value="P:axon guidance"/>
    <property type="evidence" value="ECO:0000314"/>
    <property type="project" value="RGD"/>
</dbReference>
<dbReference type="GO" id="GO:0050919">
    <property type="term" value="P:negative chemotaxis"/>
    <property type="evidence" value="ECO:0000318"/>
    <property type="project" value="GO_Central"/>
</dbReference>
<dbReference type="GO" id="GO:0030517">
    <property type="term" value="P:negative regulation of axon extension"/>
    <property type="evidence" value="ECO:0000314"/>
    <property type="project" value="MGI"/>
</dbReference>
<dbReference type="GO" id="GO:0001755">
    <property type="term" value="P:neural crest cell migration"/>
    <property type="evidence" value="ECO:0000318"/>
    <property type="project" value="GO_Central"/>
</dbReference>
<dbReference type="GO" id="GO:0030335">
    <property type="term" value="P:positive regulation of cell migration"/>
    <property type="evidence" value="ECO:0000318"/>
    <property type="project" value="GO_Central"/>
</dbReference>
<dbReference type="GO" id="GO:0031290">
    <property type="term" value="P:retinal ganglion cell axon guidance"/>
    <property type="evidence" value="ECO:0000314"/>
    <property type="project" value="MGI"/>
</dbReference>
<dbReference type="GO" id="GO:0071526">
    <property type="term" value="P:semaphorin-plexin signaling pathway"/>
    <property type="evidence" value="ECO:0000318"/>
    <property type="project" value="GO_Central"/>
</dbReference>
<dbReference type="CDD" id="cd11261">
    <property type="entry name" value="Sema_4F"/>
    <property type="match status" value="1"/>
</dbReference>
<dbReference type="FunFam" id="2.130.10.10:FF:000351">
    <property type="entry name" value="semaphorin-4F isoform X1"/>
    <property type="match status" value="1"/>
</dbReference>
<dbReference type="FunFam" id="3.30.1680.10:FF:000010">
    <property type="entry name" value="semaphorin-4F isoform X1"/>
    <property type="match status" value="1"/>
</dbReference>
<dbReference type="Gene3D" id="3.30.1680.10">
    <property type="entry name" value="ligand-binding face of the semaphorins, domain 2"/>
    <property type="match status" value="1"/>
</dbReference>
<dbReference type="Gene3D" id="2.130.10.10">
    <property type="entry name" value="YVTN repeat-like/Quinoprotein amine dehydrogenase"/>
    <property type="match status" value="1"/>
</dbReference>
<dbReference type="InterPro" id="IPR002165">
    <property type="entry name" value="Plexin_repeat"/>
</dbReference>
<dbReference type="InterPro" id="IPR016201">
    <property type="entry name" value="PSI"/>
</dbReference>
<dbReference type="InterPro" id="IPR047085">
    <property type="entry name" value="Sem4F_Sema_dom"/>
</dbReference>
<dbReference type="InterPro" id="IPR045791">
    <property type="entry name" value="Sema4F_C"/>
</dbReference>
<dbReference type="InterPro" id="IPR001627">
    <property type="entry name" value="Semap_dom"/>
</dbReference>
<dbReference type="InterPro" id="IPR036352">
    <property type="entry name" value="Semap_dom_sf"/>
</dbReference>
<dbReference type="InterPro" id="IPR027231">
    <property type="entry name" value="Semaphorin"/>
</dbReference>
<dbReference type="InterPro" id="IPR015943">
    <property type="entry name" value="WD40/YVTN_repeat-like_dom_sf"/>
</dbReference>
<dbReference type="PANTHER" id="PTHR11036">
    <property type="entry name" value="SEMAPHORIN"/>
    <property type="match status" value="1"/>
</dbReference>
<dbReference type="PANTHER" id="PTHR11036:SF72">
    <property type="entry name" value="SEMAPHORIN-4F"/>
    <property type="match status" value="1"/>
</dbReference>
<dbReference type="Pfam" id="PF01437">
    <property type="entry name" value="PSI"/>
    <property type="match status" value="1"/>
</dbReference>
<dbReference type="Pfam" id="PF01403">
    <property type="entry name" value="Sema"/>
    <property type="match status" value="1"/>
</dbReference>
<dbReference type="Pfam" id="PF19428">
    <property type="entry name" value="Sema4F_C"/>
    <property type="match status" value="1"/>
</dbReference>
<dbReference type="SMART" id="SM00423">
    <property type="entry name" value="PSI"/>
    <property type="match status" value="1"/>
</dbReference>
<dbReference type="SMART" id="SM00630">
    <property type="entry name" value="Sema"/>
    <property type="match status" value="1"/>
</dbReference>
<dbReference type="SUPFAM" id="SSF103575">
    <property type="entry name" value="Plexin repeat"/>
    <property type="match status" value="1"/>
</dbReference>
<dbReference type="SUPFAM" id="SSF101912">
    <property type="entry name" value="Sema domain"/>
    <property type="match status" value="1"/>
</dbReference>
<dbReference type="PROSITE" id="PS51004">
    <property type="entry name" value="SEMA"/>
    <property type="match status" value="1"/>
</dbReference>
<reference key="1">
    <citation type="journal article" date="1999" name="Proc. Natl. Acad. Sci. U.S.A.">
        <title>Cloning, expression, and genetic mapping of Sema W, a member of the semaphorin family.</title>
        <authorList>
            <person name="Encinas J.A."/>
            <person name="Kikuchi K."/>
            <person name="Chedotal A."/>
            <person name="de Castro F."/>
            <person name="Goodman C.S."/>
            <person name="Kimura T."/>
        </authorList>
    </citation>
    <scope>NUCLEOTIDE SEQUENCE [MRNA]</scope>
    <scope>FUNCTION</scope>
    <scope>SUBCELLULAR LOCATION</scope>
    <scope>TISSUE SPECIFICITY</scope>
    <source>
        <strain>Sprague-Dawley</strain>
        <tissue>Brain</tissue>
    </source>
</reference>
<reference key="2">
    <citation type="journal article" date="2001" name="J. Neurochem.">
        <title>Semaphorin4F interacts with the synapse-associated protein SAP90/PSD-95.</title>
        <authorList>
            <person name="Schultze W."/>
            <person name="Eulenburg V."/>
            <person name="Lessmann V."/>
            <person name="Herrmann L."/>
            <person name="Dittmar T."/>
            <person name="Gundelfinger E.D."/>
            <person name="Heumann R."/>
            <person name="Erdmann K.S."/>
        </authorList>
    </citation>
    <scope>INTERACTION WITH DLG4</scope>
    <scope>SUBCELLULAR LOCATION</scope>
</reference>
<reference key="3">
    <citation type="journal article" date="2012" name="Mol. Cell. Neurosci.">
        <title>Expression of Semaphorin 4F in neurons and brain oligodendrocytes and the regulation of oligodendrocyte precursor migration in the optic nerve.</title>
        <authorList>
            <person name="Armendariz B.G."/>
            <person name="Bribian A."/>
            <person name="Perez-Martinez E."/>
            <person name="Martinez A."/>
            <person name="de Castro F."/>
            <person name="Soriano E."/>
            <person name="Burgaya F."/>
        </authorList>
    </citation>
    <scope>FUNCTION</scope>
</reference>
<proteinExistence type="evidence at protein level"/>
<sequence>MLARAERPRPGPRPPPVFPFPPPLSLLLLLAILSAPVCGRVPRSVPRTSLPISEADSYLTRFAASHTYNYSALLVDPASHTLYVGARDSIFALTLPFSGERPRRIDWMVPETHRQNCRKKGKKEDECHNFIQILAIVNASHLLTCGTFAFDPKCGVIDVSSFQQVERLESGRGKCPFEPAQRSAAVMAGGVLYTATVKNFLGTEPIISRAVGRAEDWIRTETLSSWLNAPAFVAAMVLSPAEWGDEDGDDEIFFFFTETSRVLDSYERIKVPRVARVCAGDLGGRKTLQQRWTTFLKADLLCPGPEHGRASGVLQAMAELRPQPGAGTPIFYGIFSSQWEGAAISAVCAFRPQDIRAVLNGPFRELKHDCNRGLPVMDNEVPQPRPGECIANNMKLQQFGSSLSLPDRVLTFIRDHPLMDRPVFPADGRPLLVTTDTAYLRVVAHRVTSLSGKEYDVLYLGTEDGHLHRAVRIGAQLSVLEDLALFPEPQPVESMKLYHDWLLVGSHTEVTQVNTSNCGRLQSCSECILAQDPVCAWSFRLDACVAHAGEHRGMVQDIESADVSSLCPKEPGEHPVVFEVPVATVGHVVLPCSPSSAWASCVWHQPSGVTALTPRRDGLEVVVTPGAMGAYACECQEGGAARVVAAYSLVWGSQRGPSNRAHTVVGAGLVGFLLGVLAASLTLLLIGRRQQRRRQRELLARDKVGLDLGAPPSGTTSYSQDPPSPSPEDERLPLALGKRGSGFGGFPPPFLLDSCPSPAHIRLTGAPLATCDETSI</sequence>
<protein>
    <recommendedName>
        <fullName>Semaphorin-4F</fullName>
    </recommendedName>
    <alternativeName>
        <fullName>Semaphorin-W</fullName>
        <shortName>Sema W</shortName>
    </alternativeName>
</protein>
<name>SEM4F_RAT</name>
<gene>
    <name type="primary">Sema4f</name>
</gene>
<feature type="signal peptide" evidence="2">
    <location>
        <begin position="1"/>
        <end position="39"/>
    </location>
</feature>
<feature type="chain" id="PRO_0000032332" description="Semaphorin-4F">
    <location>
        <begin position="40"/>
        <end position="776"/>
    </location>
</feature>
<feature type="topological domain" description="Extracellular" evidence="2">
    <location>
        <begin position="40"/>
        <end position="665"/>
    </location>
</feature>
<feature type="transmembrane region" description="Helical" evidence="2">
    <location>
        <begin position="666"/>
        <end position="686"/>
    </location>
</feature>
<feature type="topological domain" description="Cytoplasmic" evidence="2">
    <location>
        <begin position="687"/>
        <end position="776"/>
    </location>
</feature>
<feature type="domain" description="Sema" evidence="3">
    <location>
        <begin position="47"/>
        <end position="515"/>
    </location>
</feature>
<feature type="domain" description="PSI">
    <location>
        <begin position="517"/>
        <end position="568"/>
    </location>
</feature>
<feature type="domain" description="Ig-like C2-type">
    <location>
        <begin position="585"/>
        <end position="640"/>
    </location>
</feature>
<feature type="region of interest" description="Disordered" evidence="4">
    <location>
        <begin position="702"/>
        <end position="741"/>
    </location>
</feature>
<feature type="short sequence motif" description="PDZ-binding" evidence="1">
    <location>
        <begin position="774"/>
        <end position="776"/>
    </location>
</feature>
<feature type="modified residue" description="Phosphoserine" evidence="1">
    <location>
        <position position="724"/>
    </location>
</feature>
<feature type="modified residue" description="Phosphoserine" evidence="1">
    <location>
        <position position="726"/>
    </location>
</feature>
<feature type="glycosylation site" description="N-linked (GlcNAc...) asparagine" evidence="2">
    <location>
        <position position="69"/>
    </location>
</feature>
<feature type="glycosylation site" description="N-linked (GlcNAc...) asparagine" evidence="2">
    <location>
        <position position="138"/>
    </location>
</feature>
<feature type="glycosylation site" description="N-linked (GlcNAc...) asparagine" evidence="2">
    <location>
        <position position="514"/>
    </location>
</feature>
<feature type="disulfide bond" evidence="3">
    <location>
        <begin position="117"/>
        <end position="127"/>
    </location>
</feature>
<feature type="disulfide bond" evidence="3">
    <location>
        <begin position="145"/>
        <end position="154"/>
    </location>
</feature>
<feature type="disulfide bond" evidence="3">
    <location>
        <begin position="278"/>
        <end position="389"/>
    </location>
</feature>
<feature type="disulfide bond" evidence="3">
    <location>
        <begin position="302"/>
        <end position="348"/>
    </location>
</feature>
<feature type="disulfide bond" evidence="3">
    <location>
        <begin position="518"/>
        <end position="535"/>
    </location>
</feature>
<feature type="disulfide bond" evidence="3">
    <location>
        <begin position="527"/>
        <end position="544"/>
    </location>
</feature>
<feature type="disulfide bond" evidence="3">
    <location>
        <begin position="592"/>
        <end position="633"/>
    </location>
</feature>
<comment type="function">
    <text evidence="1 5 7">Probable cell surface receptor that regulates oligodendroglial precursor cell migration (By similarity). Might also regulate differentiation of oligodendroglial precursor cells (PubMed:21945643). Has growth cone collapse activity against retinal ganglion-cell axons (PubMed:10051670).</text>
</comment>
<comment type="subunit">
    <text evidence="6">Interacts (via PDZ-binding motif) with DLG4/SAP90 (via PDZ domain 2); this interaction may promote translocation of DLG4/SAP90 to the membrane.</text>
</comment>
<comment type="subcellular location">
    <subcellularLocation>
        <location evidence="5">Cell membrane</location>
        <topology evidence="8">Single-pass type I membrane protein</topology>
    </subcellularLocation>
    <subcellularLocation>
        <location evidence="6">Postsynaptic density</location>
    </subcellularLocation>
    <subcellularLocation>
        <location evidence="1">Perikaryon</location>
    </subcellularLocation>
    <subcellularLocation>
        <location evidence="1">Cell projection</location>
        <location evidence="1">Dendrite</location>
    </subcellularLocation>
    <text evidence="1">Colocalizes with DLG4 at synapses.</text>
</comment>
<comment type="tissue specificity">
    <text evidence="5">Expressed at low levels in the developing embryo (PubMed:10051670). Expressed at high levels in the lung and adult central nervous system, including the dorsal root ganglia (PubMed:10051670).</text>
</comment>
<comment type="similarity">
    <text evidence="8">Belongs to the semaphorin family.</text>
</comment>
<organism>
    <name type="scientific">Rattus norvegicus</name>
    <name type="common">Rat</name>
    <dbReference type="NCBI Taxonomy" id="10116"/>
    <lineage>
        <taxon>Eukaryota</taxon>
        <taxon>Metazoa</taxon>
        <taxon>Chordata</taxon>
        <taxon>Craniata</taxon>
        <taxon>Vertebrata</taxon>
        <taxon>Euteleostomi</taxon>
        <taxon>Mammalia</taxon>
        <taxon>Eutheria</taxon>
        <taxon>Euarchontoglires</taxon>
        <taxon>Glires</taxon>
        <taxon>Rodentia</taxon>
        <taxon>Myomorpha</taxon>
        <taxon>Muroidea</taxon>
        <taxon>Muridae</taxon>
        <taxon>Murinae</taxon>
        <taxon>Rattus</taxon>
    </lineage>
</organism>
<keyword id="KW-1003">Cell membrane</keyword>
<keyword id="KW-0966">Cell projection</keyword>
<keyword id="KW-0217">Developmental protein</keyword>
<keyword id="KW-0221">Differentiation</keyword>
<keyword id="KW-1015">Disulfide bond</keyword>
<keyword id="KW-0325">Glycoprotein</keyword>
<keyword id="KW-0393">Immunoglobulin domain</keyword>
<keyword id="KW-0472">Membrane</keyword>
<keyword id="KW-0524">Neurogenesis</keyword>
<keyword id="KW-0597">Phosphoprotein</keyword>
<keyword id="KW-1185">Reference proteome</keyword>
<keyword id="KW-0732">Signal</keyword>
<keyword id="KW-0770">Synapse</keyword>
<keyword id="KW-0812">Transmembrane</keyword>
<keyword id="KW-1133">Transmembrane helix</keyword>
<evidence type="ECO:0000250" key="1">
    <source>
        <dbReference type="UniProtKB" id="Q9Z123"/>
    </source>
</evidence>
<evidence type="ECO:0000255" key="2"/>
<evidence type="ECO:0000255" key="3">
    <source>
        <dbReference type="PROSITE-ProRule" id="PRU00352"/>
    </source>
</evidence>
<evidence type="ECO:0000256" key="4">
    <source>
        <dbReference type="SAM" id="MobiDB-lite"/>
    </source>
</evidence>
<evidence type="ECO:0000269" key="5">
    <source>
    </source>
</evidence>
<evidence type="ECO:0000269" key="6">
    <source>
    </source>
</evidence>
<evidence type="ECO:0000269" key="7">
    <source>
    </source>
</evidence>
<evidence type="ECO:0000305" key="8"/>